<comment type="function">
    <text evidence="2">GTP hydrolase that promotes the GTP-dependent binding of aminoacyl-tRNA to the A-site of ribosomes during protein biosynthesis.</text>
</comment>
<comment type="catalytic activity">
    <reaction evidence="2">
        <text>GTP + H2O = GDP + phosphate + H(+)</text>
        <dbReference type="Rhea" id="RHEA:19669"/>
        <dbReference type="ChEBI" id="CHEBI:15377"/>
        <dbReference type="ChEBI" id="CHEBI:15378"/>
        <dbReference type="ChEBI" id="CHEBI:37565"/>
        <dbReference type="ChEBI" id="CHEBI:43474"/>
        <dbReference type="ChEBI" id="CHEBI:58189"/>
        <dbReference type="EC" id="3.6.5.3"/>
    </reaction>
    <physiologicalReaction direction="left-to-right" evidence="2">
        <dbReference type="Rhea" id="RHEA:19670"/>
    </physiologicalReaction>
</comment>
<comment type="subunit">
    <text evidence="2">Monomer.</text>
</comment>
<comment type="subcellular location">
    <subcellularLocation>
        <location evidence="2">Cytoplasm</location>
    </subcellularLocation>
</comment>
<comment type="similarity">
    <text evidence="2">Belongs to the TRAFAC class translation factor GTPase superfamily. Classic translation factor GTPase family. EF-Tu/EF-1A subfamily.</text>
</comment>
<feature type="chain" id="PRO_1000015782" description="Elongation factor Tu">
    <location>
        <begin position="1"/>
        <end position="397"/>
    </location>
</feature>
<feature type="domain" description="tr-type G">
    <location>
        <begin position="10"/>
        <end position="207"/>
    </location>
</feature>
<feature type="region of interest" description="G1" evidence="1">
    <location>
        <begin position="19"/>
        <end position="26"/>
    </location>
</feature>
<feature type="region of interest" description="G2" evidence="1">
    <location>
        <begin position="63"/>
        <end position="67"/>
    </location>
</feature>
<feature type="region of interest" description="G3" evidence="1">
    <location>
        <begin position="84"/>
        <end position="87"/>
    </location>
</feature>
<feature type="region of interest" description="G4" evidence="1">
    <location>
        <begin position="139"/>
        <end position="142"/>
    </location>
</feature>
<feature type="region of interest" description="G5" evidence="1">
    <location>
        <begin position="177"/>
        <end position="179"/>
    </location>
</feature>
<feature type="binding site" evidence="2">
    <location>
        <begin position="19"/>
        <end position="26"/>
    </location>
    <ligand>
        <name>GTP</name>
        <dbReference type="ChEBI" id="CHEBI:37565"/>
    </ligand>
</feature>
<feature type="binding site" evidence="2">
    <location>
        <position position="26"/>
    </location>
    <ligand>
        <name>Mg(2+)</name>
        <dbReference type="ChEBI" id="CHEBI:18420"/>
    </ligand>
</feature>
<feature type="binding site" evidence="2">
    <location>
        <begin position="84"/>
        <end position="88"/>
    </location>
    <ligand>
        <name>GTP</name>
        <dbReference type="ChEBI" id="CHEBI:37565"/>
    </ligand>
</feature>
<feature type="binding site" evidence="2">
    <location>
        <begin position="139"/>
        <end position="142"/>
    </location>
    <ligand>
        <name>GTP</name>
        <dbReference type="ChEBI" id="CHEBI:37565"/>
    </ligand>
</feature>
<reference key="1">
    <citation type="journal article" date="2003" name="Lancet">
        <title>Sequencing and analysis of the genome of the Whipple's disease bacterium Tropheryma whipplei.</title>
        <authorList>
            <person name="Bentley S.D."/>
            <person name="Maiwald M."/>
            <person name="Murphy L.D."/>
            <person name="Pallen M.J."/>
            <person name="Yeats C.A."/>
            <person name="Dover L.G."/>
            <person name="Norbertczak H.T."/>
            <person name="Besra G.S."/>
            <person name="Quail M.A."/>
            <person name="Harris D.E."/>
            <person name="von Herbay A."/>
            <person name="Goble A."/>
            <person name="Rutter S."/>
            <person name="Squares R."/>
            <person name="Squares S."/>
            <person name="Barrell B.G."/>
            <person name="Parkhill J."/>
            <person name="Relman D.A."/>
        </authorList>
    </citation>
    <scope>NUCLEOTIDE SEQUENCE [LARGE SCALE GENOMIC DNA]</scope>
    <source>
        <strain>TW08/27</strain>
    </source>
</reference>
<dbReference type="EC" id="3.6.5.3" evidence="2"/>
<dbReference type="EMBL" id="BX251410">
    <property type="protein sequence ID" value="CAD66811.1"/>
    <property type="molecule type" value="Genomic_DNA"/>
</dbReference>
<dbReference type="RefSeq" id="WP_011096092.1">
    <property type="nucleotide sequence ID" value="NC_004551.1"/>
</dbReference>
<dbReference type="SMR" id="Q83NT9"/>
<dbReference type="GeneID" id="67387903"/>
<dbReference type="KEGG" id="tws:TW131"/>
<dbReference type="HOGENOM" id="CLU_007265_0_1_11"/>
<dbReference type="GO" id="GO:0005829">
    <property type="term" value="C:cytosol"/>
    <property type="evidence" value="ECO:0007669"/>
    <property type="project" value="TreeGrafter"/>
</dbReference>
<dbReference type="GO" id="GO:0005525">
    <property type="term" value="F:GTP binding"/>
    <property type="evidence" value="ECO:0007669"/>
    <property type="project" value="UniProtKB-UniRule"/>
</dbReference>
<dbReference type="GO" id="GO:0003924">
    <property type="term" value="F:GTPase activity"/>
    <property type="evidence" value="ECO:0007669"/>
    <property type="project" value="InterPro"/>
</dbReference>
<dbReference type="GO" id="GO:0003746">
    <property type="term" value="F:translation elongation factor activity"/>
    <property type="evidence" value="ECO:0007669"/>
    <property type="project" value="UniProtKB-UniRule"/>
</dbReference>
<dbReference type="CDD" id="cd01884">
    <property type="entry name" value="EF_Tu"/>
    <property type="match status" value="1"/>
</dbReference>
<dbReference type="CDD" id="cd03697">
    <property type="entry name" value="EFTU_II"/>
    <property type="match status" value="1"/>
</dbReference>
<dbReference type="CDD" id="cd03707">
    <property type="entry name" value="EFTU_III"/>
    <property type="match status" value="1"/>
</dbReference>
<dbReference type="FunFam" id="2.40.30.10:FF:000001">
    <property type="entry name" value="Elongation factor Tu"/>
    <property type="match status" value="1"/>
</dbReference>
<dbReference type="FunFam" id="3.40.50.300:FF:000003">
    <property type="entry name" value="Elongation factor Tu"/>
    <property type="match status" value="1"/>
</dbReference>
<dbReference type="Gene3D" id="3.40.50.300">
    <property type="entry name" value="P-loop containing nucleotide triphosphate hydrolases"/>
    <property type="match status" value="1"/>
</dbReference>
<dbReference type="Gene3D" id="2.40.30.10">
    <property type="entry name" value="Translation factors"/>
    <property type="match status" value="2"/>
</dbReference>
<dbReference type="HAMAP" id="MF_00118_B">
    <property type="entry name" value="EF_Tu_B"/>
    <property type="match status" value="1"/>
</dbReference>
<dbReference type="InterPro" id="IPR041709">
    <property type="entry name" value="EF-Tu_GTP-bd"/>
</dbReference>
<dbReference type="InterPro" id="IPR050055">
    <property type="entry name" value="EF-Tu_GTPase"/>
</dbReference>
<dbReference type="InterPro" id="IPR004161">
    <property type="entry name" value="EFTu-like_2"/>
</dbReference>
<dbReference type="InterPro" id="IPR033720">
    <property type="entry name" value="EFTU_2"/>
</dbReference>
<dbReference type="InterPro" id="IPR031157">
    <property type="entry name" value="G_TR_CS"/>
</dbReference>
<dbReference type="InterPro" id="IPR027417">
    <property type="entry name" value="P-loop_NTPase"/>
</dbReference>
<dbReference type="InterPro" id="IPR005225">
    <property type="entry name" value="Small_GTP-bd"/>
</dbReference>
<dbReference type="InterPro" id="IPR000795">
    <property type="entry name" value="T_Tr_GTP-bd_dom"/>
</dbReference>
<dbReference type="InterPro" id="IPR009000">
    <property type="entry name" value="Transl_B-barrel_sf"/>
</dbReference>
<dbReference type="InterPro" id="IPR009001">
    <property type="entry name" value="Transl_elong_EF1A/Init_IF2_C"/>
</dbReference>
<dbReference type="InterPro" id="IPR004541">
    <property type="entry name" value="Transl_elong_EFTu/EF1A_bac/org"/>
</dbReference>
<dbReference type="InterPro" id="IPR004160">
    <property type="entry name" value="Transl_elong_EFTu/EF1A_C"/>
</dbReference>
<dbReference type="NCBIfam" id="TIGR00485">
    <property type="entry name" value="EF-Tu"/>
    <property type="match status" value="1"/>
</dbReference>
<dbReference type="NCBIfam" id="NF000766">
    <property type="entry name" value="PRK00049.1"/>
    <property type="match status" value="1"/>
</dbReference>
<dbReference type="NCBIfam" id="NF009372">
    <property type="entry name" value="PRK12735.1"/>
    <property type="match status" value="1"/>
</dbReference>
<dbReference type="NCBIfam" id="NF009373">
    <property type="entry name" value="PRK12736.1"/>
    <property type="match status" value="1"/>
</dbReference>
<dbReference type="NCBIfam" id="TIGR00231">
    <property type="entry name" value="small_GTP"/>
    <property type="match status" value="1"/>
</dbReference>
<dbReference type="PANTHER" id="PTHR43721:SF22">
    <property type="entry name" value="ELONGATION FACTOR TU, MITOCHONDRIAL"/>
    <property type="match status" value="1"/>
</dbReference>
<dbReference type="PANTHER" id="PTHR43721">
    <property type="entry name" value="ELONGATION FACTOR TU-RELATED"/>
    <property type="match status" value="1"/>
</dbReference>
<dbReference type="Pfam" id="PF00009">
    <property type="entry name" value="GTP_EFTU"/>
    <property type="match status" value="1"/>
</dbReference>
<dbReference type="Pfam" id="PF03144">
    <property type="entry name" value="GTP_EFTU_D2"/>
    <property type="match status" value="1"/>
</dbReference>
<dbReference type="Pfam" id="PF03143">
    <property type="entry name" value="GTP_EFTU_D3"/>
    <property type="match status" value="1"/>
</dbReference>
<dbReference type="PRINTS" id="PR00315">
    <property type="entry name" value="ELONGATNFCT"/>
</dbReference>
<dbReference type="SUPFAM" id="SSF50465">
    <property type="entry name" value="EF-Tu/eEF-1alpha/eIF2-gamma C-terminal domain"/>
    <property type="match status" value="1"/>
</dbReference>
<dbReference type="SUPFAM" id="SSF52540">
    <property type="entry name" value="P-loop containing nucleoside triphosphate hydrolases"/>
    <property type="match status" value="1"/>
</dbReference>
<dbReference type="SUPFAM" id="SSF50447">
    <property type="entry name" value="Translation proteins"/>
    <property type="match status" value="1"/>
</dbReference>
<dbReference type="PROSITE" id="PS00301">
    <property type="entry name" value="G_TR_1"/>
    <property type="match status" value="1"/>
</dbReference>
<dbReference type="PROSITE" id="PS51722">
    <property type="entry name" value="G_TR_2"/>
    <property type="match status" value="1"/>
</dbReference>
<evidence type="ECO:0000250" key="1"/>
<evidence type="ECO:0000255" key="2">
    <source>
        <dbReference type="HAMAP-Rule" id="MF_00118"/>
    </source>
</evidence>
<sequence>MAKAKFERTKPHVNIGTIGHVDHGKTTLTAAISRVLSERLPSNTNVKQDFDAIDSAPEERQRGITINISHIEYETEKRHYAHVDAPGHADYIKNMITGAAQMDGAILVVAATDGAMAQTREHVLLAKQVGVPYLLVALNKADMVSDEEILELVELEVRELLSTHGFDGENVPVVRVSGLKALEGDQKWGDAVMELMKAVDESIPDPVRDRDKPFLMPIEDVFTITGRGTVVTGRAERGVLAVNSEVEIVGIRPTQKTTVTGIEMFRKQLDEAWAGENCGLLLRGTKREDVERGQVVVKPGSVTPHTKFEGKAYILSKDEGGRHNPFYSNYRPQFYFRTTDVTGVITLPEGTEMVMPGDTISITVDLIQPIAMEEGLGFAIREGGRTVGAGTVVKILE</sequence>
<name>EFTU_TROW8</name>
<organism>
    <name type="scientific">Tropheryma whipplei (strain TW08/27)</name>
    <name type="common">Whipple's bacillus</name>
    <dbReference type="NCBI Taxonomy" id="218496"/>
    <lineage>
        <taxon>Bacteria</taxon>
        <taxon>Bacillati</taxon>
        <taxon>Actinomycetota</taxon>
        <taxon>Actinomycetes</taxon>
        <taxon>Micrococcales</taxon>
        <taxon>Tropherymataceae</taxon>
        <taxon>Tropheryma</taxon>
    </lineage>
</organism>
<accession>Q83NT9</accession>
<proteinExistence type="inferred from homology"/>
<keyword id="KW-0963">Cytoplasm</keyword>
<keyword id="KW-0251">Elongation factor</keyword>
<keyword id="KW-0342">GTP-binding</keyword>
<keyword id="KW-0378">Hydrolase</keyword>
<keyword id="KW-0460">Magnesium</keyword>
<keyword id="KW-0479">Metal-binding</keyword>
<keyword id="KW-0547">Nucleotide-binding</keyword>
<keyword id="KW-0648">Protein biosynthesis</keyword>
<protein>
    <recommendedName>
        <fullName evidence="2">Elongation factor Tu</fullName>
        <shortName evidence="2">EF-Tu</shortName>
        <ecNumber evidence="2">3.6.5.3</ecNumber>
    </recommendedName>
</protein>
<gene>
    <name evidence="2" type="primary">tuf</name>
    <name type="ordered locus">TW131</name>
</gene>